<sequence length="126" mass="14120">MAIRIVGVDLPQNKRGEIALTYVYGIGRSSSAKILDKAGVDRDVKVKDWTDDQAAKIREIIGAEYKVEGDLRSEVQLNIKRLMDIGCYRGVRHRIGLPVRGQSTKNNARTRKGRKKTVANKKKATK</sequence>
<dbReference type="EMBL" id="CP000139">
    <property type="protein sequence ID" value="ABR38487.1"/>
    <property type="molecule type" value="Genomic_DNA"/>
</dbReference>
<dbReference type="RefSeq" id="WP_005844895.1">
    <property type="nucleotide sequence ID" value="NZ_JANSWM010000035.1"/>
</dbReference>
<dbReference type="SMR" id="A6KYH3"/>
<dbReference type="STRING" id="435590.BVU_0783"/>
<dbReference type="PaxDb" id="435590-BVU_0783"/>
<dbReference type="GeneID" id="5301750"/>
<dbReference type="KEGG" id="bvu:BVU_0783"/>
<dbReference type="eggNOG" id="COG0099">
    <property type="taxonomic scope" value="Bacteria"/>
</dbReference>
<dbReference type="HOGENOM" id="CLU_103849_1_2_10"/>
<dbReference type="BioCyc" id="BVUL435590:G1G59-823-MONOMER"/>
<dbReference type="Proteomes" id="UP000002861">
    <property type="component" value="Chromosome"/>
</dbReference>
<dbReference type="GO" id="GO:0005829">
    <property type="term" value="C:cytosol"/>
    <property type="evidence" value="ECO:0007669"/>
    <property type="project" value="TreeGrafter"/>
</dbReference>
<dbReference type="GO" id="GO:0015935">
    <property type="term" value="C:small ribosomal subunit"/>
    <property type="evidence" value="ECO:0007669"/>
    <property type="project" value="TreeGrafter"/>
</dbReference>
<dbReference type="GO" id="GO:0019843">
    <property type="term" value="F:rRNA binding"/>
    <property type="evidence" value="ECO:0007669"/>
    <property type="project" value="UniProtKB-UniRule"/>
</dbReference>
<dbReference type="GO" id="GO:0003735">
    <property type="term" value="F:structural constituent of ribosome"/>
    <property type="evidence" value="ECO:0007669"/>
    <property type="project" value="InterPro"/>
</dbReference>
<dbReference type="GO" id="GO:0000049">
    <property type="term" value="F:tRNA binding"/>
    <property type="evidence" value="ECO:0007669"/>
    <property type="project" value="UniProtKB-UniRule"/>
</dbReference>
<dbReference type="GO" id="GO:0006412">
    <property type="term" value="P:translation"/>
    <property type="evidence" value="ECO:0007669"/>
    <property type="project" value="UniProtKB-UniRule"/>
</dbReference>
<dbReference type="FunFam" id="1.10.8.50:FF:000001">
    <property type="entry name" value="30S ribosomal protein S13"/>
    <property type="match status" value="1"/>
</dbReference>
<dbReference type="FunFam" id="4.10.910.10:FF:000001">
    <property type="entry name" value="30S ribosomal protein S13"/>
    <property type="match status" value="1"/>
</dbReference>
<dbReference type="Gene3D" id="1.10.8.50">
    <property type="match status" value="1"/>
</dbReference>
<dbReference type="Gene3D" id="4.10.910.10">
    <property type="entry name" value="30s ribosomal protein s13, domain 2"/>
    <property type="match status" value="1"/>
</dbReference>
<dbReference type="HAMAP" id="MF_01315">
    <property type="entry name" value="Ribosomal_uS13"/>
    <property type="match status" value="1"/>
</dbReference>
<dbReference type="InterPro" id="IPR027437">
    <property type="entry name" value="Rbsml_uS13_C"/>
</dbReference>
<dbReference type="InterPro" id="IPR001892">
    <property type="entry name" value="Ribosomal_uS13"/>
</dbReference>
<dbReference type="InterPro" id="IPR010979">
    <property type="entry name" value="Ribosomal_uS13-like_H2TH"/>
</dbReference>
<dbReference type="InterPro" id="IPR019980">
    <property type="entry name" value="Ribosomal_uS13_bac-type"/>
</dbReference>
<dbReference type="InterPro" id="IPR018269">
    <property type="entry name" value="Ribosomal_uS13_CS"/>
</dbReference>
<dbReference type="NCBIfam" id="TIGR03631">
    <property type="entry name" value="uS13_bact"/>
    <property type="match status" value="1"/>
</dbReference>
<dbReference type="PANTHER" id="PTHR10871">
    <property type="entry name" value="30S RIBOSOMAL PROTEIN S13/40S RIBOSOMAL PROTEIN S18"/>
    <property type="match status" value="1"/>
</dbReference>
<dbReference type="PANTHER" id="PTHR10871:SF1">
    <property type="entry name" value="SMALL RIBOSOMAL SUBUNIT PROTEIN US13M"/>
    <property type="match status" value="1"/>
</dbReference>
<dbReference type="Pfam" id="PF00416">
    <property type="entry name" value="Ribosomal_S13"/>
    <property type="match status" value="1"/>
</dbReference>
<dbReference type="PIRSF" id="PIRSF002134">
    <property type="entry name" value="Ribosomal_S13"/>
    <property type="match status" value="1"/>
</dbReference>
<dbReference type="SUPFAM" id="SSF46946">
    <property type="entry name" value="S13-like H2TH domain"/>
    <property type="match status" value="1"/>
</dbReference>
<dbReference type="PROSITE" id="PS00646">
    <property type="entry name" value="RIBOSOMAL_S13_1"/>
    <property type="match status" value="1"/>
</dbReference>
<dbReference type="PROSITE" id="PS50159">
    <property type="entry name" value="RIBOSOMAL_S13_2"/>
    <property type="match status" value="1"/>
</dbReference>
<organism>
    <name type="scientific">Phocaeicola vulgatus (strain ATCC 8482 / DSM 1447 / JCM 5826 / CCUG 4940 / NBRC 14291 / NCTC 11154)</name>
    <name type="common">Bacteroides vulgatus</name>
    <dbReference type="NCBI Taxonomy" id="435590"/>
    <lineage>
        <taxon>Bacteria</taxon>
        <taxon>Pseudomonadati</taxon>
        <taxon>Bacteroidota</taxon>
        <taxon>Bacteroidia</taxon>
        <taxon>Bacteroidales</taxon>
        <taxon>Bacteroidaceae</taxon>
        <taxon>Phocaeicola</taxon>
    </lineage>
</organism>
<proteinExistence type="inferred from homology"/>
<comment type="function">
    <text evidence="1">Located at the top of the head of the 30S subunit, it contacts several helices of the 16S rRNA. In the 70S ribosome it contacts the 23S rRNA (bridge B1a) and protein L5 of the 50S subunit (bridge B1b), connecting the 2 subunits; these bridges are implicated in subunit movement. Contacts the tRNAs in the A and P-sites.</text>
</comment>
<comment type="subunit">
    <text evidence="1">Part of the 30S ribosomal subunit. Forms a loose heterodimer with protein S19. Forms two bridges to the 50S subunit in the 70S ribosome.</text>
</comment>
<comment type="similarity">
    <text evidence="1">Belongs to the universal ribosomal protein uS13 family.</text>
</comment>
<protein>
    <recommendedName>
        <fullName evidence="1">Small ribosomal subunit protein uS13</fullName>
    </recommendedName>
    <alternativeName>
        <fullName evidence="3">30S ribosomal protein S13</fullName>
    </alternativeName>
</protein>
<gene>
    <name evidence="1" type="primary">rpsM</name>
    <name type="ordered locus">BVU_0783</name>
</gene>
<accession>A6KYH3</accession>
<evidence type="ECO:0000255" key="1">
    <source>
        <dbReference type="HAMAP-Rule" id="MF_01315"/>
    </source>
</evidence>
<evidence type="ECO:0000256" key="2">
    <source>
        <dbReference type="SAM" id="MobiDB-lite"/>
    </source>
</evidence>
<evidence type="ECO:0000305" key="3"/>
<keyword id="KW-0687">Ribonucleoprotein</keyword>
<keyword id="KW-0689">Ribosomal protein</keyword>
<keyword id="KW-0694">RNA-binding</keyword>
<keyword id="KW-0699">rRNA-binding</keyword>
<keyword id="KW-0820">tRNA-binding</keyword>
<reference key="1">
    <citation type="journal article" date="2007" name="PLoS Biol.">
        <title>Evolution of symbiotic bacteria in the distal human intestine.</title>
        <authorList>
            <person name="Xu J."/>
            <person name="Mahowald M.A."/>
            <person name="Ley R.E."/>
            <person name="Lozupone C.A."/>
            <person name="Hamady M."/>
            <person name="Martens E.C."/>
            <person name="Henrissat B."/>
            <person name="Coutinho P.M."/>
            <person name="Minx P."/>
            <person name="Latreille P."/>
            <person name="Cordum H."/>
            <person name="Van Brunt A."/>
            <person name="Kim K."/>
            <person name="Fulton R.S."/>
            <person name="Fulton L.A."/>
            <person name="Clifton S.W."/>
            <person name="Wilson R.K."/>
            <person name="Knight R.D."/>
            <person name="Gordon J.I."/>
        </authorList>
    </citation>
    <scope>NUCLEOTIDE SEQUENCE [LARGE SCALE GENOMIC DNA]</scope>
    <source>
        <strain>ATCC 8482 / DSM 1447 / JCM 5826 / CCUG 4940 / NBRC 14291 / NCTC 11154</strain>
    </source>
</reference>
<feature type="chain" id="PRO_0000306565" description="Small ribosomal subunit protein uS13">
    <location>
        <begin position="1"/>
        <end position="126"/>
    </location>
</feature>
<feature type="region of interest" description="Disordered" evidence="2">
    <location>
        <begin position="98"/>
        <end position="126"/>
    </location>
</feature>
<feature type="compositionally biased region" description="Basic residues" evidence="2">
    <location>
        <begin position="108"/>
        <end position="126"/>
    </location>
</feature>
<name>RS13_PHOV8</name>